<gene>
    <name evidence="1" type="primary">rpsB</name>
    <name type="ordered locus">SO_1629</name>
</gene>
<keyword id="KW-1185">Reference proteome</keyword>
<keyword id="KW-0687">Ribonucleoprotein</keyword>
<keyword id="KW-0689">Ribosomal protein</keyword>
<comment type="similarity">
    <text evidence="1">Belongs to the universal ribosomal protein uS2 family.</text>
</comment>
<name>RS2_SHEON</name>
<proteinExistence type="inferred from homology"/>
<dbReference type="EMBL" id="AE014299">
    <property type="protein sequence ID" value="AAN54684.1"/>
    <property type="molecule type" value="Genomic_DNA"/>
</dbReference>
<dbReference type="RefSeq" id="NP_717240.1">
    <property type="nucleotide sequence ID" value="NC_004347.2"/>
</dbReference>
<dbReference type="RefSeq" id="WP_011071784.1">
    <property type="nucleotide sequence ID" value="NZ_CP053946.1"/>
</dbReference>
<dbReference type="SMR" id="Q8EGH5"/>
<dbReference type="STRING" id="211586.SO_1629"/>
<dbReference type="PaxDb" id="211586-SO_1629"/>
<dbReference type="GeneID" id="94728753"/>
<dbReference type="KEGG" id="son:SO_1629"/>
<dbReference type="PATRIC" id="fig|211586.12.peg.1568"/>
<dbReference type="eggNOG" id="COG0052">
    <property type="taxonomic scope" value="Bacteria"/>
</dbReference>
<dbReference type="HOGENOM" id="CLU_040318_1_2_6"/>
<dbReference type="OrthoDB" id="9808036at2"/>
<dbReference type="PhylomeDB" id="Q8EGH5"/>
<dbReference type="BioCyc" id="SONE211586:G1GMP-1499-MONOMER"/>
<dbReference type="Proteomes" id="UP000008186">
    <property type="component" value="Chromosome"/>
</dbReference>
<dbReference type="GO" id="GO:0022627">
    <property type="term" value="C:cytosolic small ribosomal subunit"/>
    <property type="evidence" value="ECO:0000318"/>
    <property type="project" value="GO_Central"/>
</dbReference>
<dbReference type="GO" id="GO:0003735">
    <property type="term" value="F:structural constituent of ribosome"/>
    <property type="evidence" value="ECO:0000318"/>
    <property type="project" value="GO_Central"/>
</dbReference>
<dbReference type="GO" id="GO:0006412">
    <property type="term" value="P:translation"/>
    <property type="evidence" value="ECO:0007669"/>
    <property type="project" value="UniProtKB-UniRule"/>
</dbReference>
<dbReference type="CDD" id="cd01425">
    <property type="entry name" value="RPS2"/>
    <property type="match status" value="1"/>
</dbReference>
<dbReference type="FunFam" id="1.10.287.610:FF:000001">
    <property type="entry name" value="30S ribosomal protein S2"/>
    <property type="match status" value="1"/>
</dbReference>
<dbReference type="Gene3D" id="3.40.50.10490">
    <property type="entry name" value="Glucose-6-phosphate isomerase like protein, domain 1"/>
    <property type="match status" value="1"/>
</dbReference>
<dbReference type="Gene3D" id="1.10.287.610">
    <property type="entry name" value="Helix hairpin bin"/>
    <property type="match status" value="1"/>
</dbReference>
<dbReference type="HAMAP" id="MF_00291_B">
    <property type="entry name" value="Ribosomal_uS2_B"/>
    <property type="match status" value="1"/>
</dbReference>
<dbReference type="InterPro" id="IPR001865">
    <property type="entry name" value="Ribosomal_uS2"/>
</dbReference>
<dbReference type="InterPro" id="IPR005706">
    <property type="entry name" value="Ribosomal_uS2_bac/mit/plastid"/>
</dbReference>
<dbReference type="InterPro" id="IPR018130">
    <property type="entry name" value="Ribosomal_uS2_CS"/>
</dbReference>
<dbReference type="InterPro" id="IPR023591">
    <property type="entry name" value="Ribosomal_uS2_flav_dom_sf"/>
</dbReference>
<dbReference type="NCBIfam" id="TIGR01011">
    <property type="entry name" value="rpsB_bact"/>
    <property type="match status" value="1"/>
</dbReference>
<dbReference type="PANTHER" id="PTHR12534">
    <property type="entry name" value="30S RIBOSOMAL PROTEIN S2 PROKARYOTIC AND ORGANELLAR"/>
    <property type="match status" value="1"/>
</dbReference>
<dbReference type="PANTHER" id="PTHR12534:SF0">
    <property type="entry name" value="SMALL RIBOSOMAL SUBUNIT PROTEIN US2M"/>
    <property type="match status" value="1"/>
</dbReference>
<dbReference type="Pfam" id="PF00318">
    <property type="entry name" value="Ribosomal_S2"/>
    <property type="match status" value="1"/>
</dbReference>
<dbReference type="PRINTS" id="PR00395">
    <property type="entry name" value="RIBOSOMALS2"/>
</dbReference>
<dbReference type="SUPFAM" id="SSF52313">
    <property type="entry name" value="Ribosomal protein S2"/>
    <property type="match status" value="1"/>
</dbReference>
<dbReference type="PROSITE" id="PS00962">
    <property type="entry name" value="RIBOSOMAL_S2_1"/>
    <property type="match status" value="1"/>
</dbReference>
<dbReference type="PROSITE" id="PS00963">
    <property type="entry name" value="RIBOSOMAL_S2_2"/>
    <property type="match status" value="1"/>
</dbReference>
<accession>Q8EGH5</accession>
<organism>
    <name type="scientific">Shewanella oneidensis (strain ATCC 700550 / JCM 31522 / CIP 106686 / LMG 19005 / NCIMB 14063 / MR-1)</name>
    <dbReference type="NCBI Taxonomy" id="211586"/>
    <lineage>
        <taxon>Bacteria</taxon>
        <taxon>Pseudomonadati</taxon>
        <taxon>Pseudomonadota</taxon>
        <taxon>Gammaproteobacteria</taxon>
        <taxon>Alteromonadales</taxon>
        <taxon>Shewanellaceae</taxon>
        <taxon>Shewanella</taxon>
    </lineage>
</organism>
<feature type="chain" id="PRO_0000134233" description="Small ribosomal subunit protein uS2">
    <location>
        <begin position="1"/>
        <end position="242"/>
    </location>
</feature>
<sequence>MTTVSMRDMLQAGVHFGHQTRYWNPKMKPFIFGARNGVHIINLEHTVPMFNEALAFISNVASKKGKVLFVGTKRAAGEAIKEAAISCDQYYVDHRWLGGMLTNWKTVRQSIKRLKELESQSVDGTFDKLTKKEALMRTRELEKLEKSLGGIKNMGGLPDVLFVIGADHEHIAIKEANNLGIPVVAVVDTNSAPDGVNYIVPGNDDAMRAIRLYTTSVAAAANAGRGQDLAVQAEQDGFVEAE</sequence>
<reference key="1">
    <citation type="journal article" date="2002" name="Nat. Biotechnol.">
        <title>Genome sequence of the dissimilatory metal ion-reducing bacterium Shewanella oneidensis.</title>
        <authorList>
            <person name="Heidelberg J.F."/>
            <person name="Paulsen I.T."/>
            <person name="Nelson K.E."/>
            <person name="Gaidos E.J."/>
            <person name="Nelson W.C."/>
            <person name="Read T.D."/>
            <person name="Eisen J.A."/>
            <person name="Seshadri R."/>
            <person name="Ward N.L."/>
            <person name="Methe B.A."/>
            <person name="Clayton R.A."/>
            <person name="Meyer T."/>
            <person name="Tsapin A."/>
            <person name="Scott J."/>
            <person name="Beanan M.J."/>
            <person name="Brinkac L.M."/>
            <person name="Daugherty S.C."/>
            <person name="DeBoy R.T."/>
            <person name="Dodson R.J."/>
            <person name="Durkin A.S."/>
            <person name="Haft D.H."/>
            <person name="Kolonay J.F."/>
            <person name="Madupu R."/>
            <person name="Peterson J.D."/>
            <person name="Umayam L.A."/>
            <person name="White O."/>
            <person name="Wolf A.M."/>
            <person name="Vamathevan J.J."/>
            <person name="Weidman J.F."/>
            <person name="Impraim M."/>
            <person name="Lee K."/>
            <person name="Berry K.J."/>
            <person name="Lee C."/>
            <person name="Mueller J."/>
            <person name="Khouri H.M."/>
            <person name="Gill J."/>
            <person name="Utterback T.R."/>
            <person name="McDonald L.A."/>
            <person name="Feldblyum T.V."/>
            <person name="Smith H.O."/>
            <person name="Venter J.C."/>
            <person name="Nealson K.H."/>
            <person name="Fraser C.M."/>
        </authorList>
    </citation>
    <scope>NUCLEOTIDE SEQUENCE [LARGE SCALE GENOMIC DNA]</scope>
    <source>
        <strain>ATCC 700550 / JCM 31522 / CIP 106686 / LMG 19005 / NCIMB 14063 / MR-1</strain>
    </source>
</reference>
<evidence type="ECO:0000255" key="1">
    <source>
        <dbReference type="HAMAP-Rule" id="MF_00291"/>
    </source>
</evidence>
<evidence type="ECO:0000305" key="2"/>
<protein>
    <recommendedName>
        <fullName evidence="1">Small ribosomal subunit protein uS2</fullName>
    </recommendedName>
    <alternativeName>
        <fullName evidence="2">30S ribosomal protein S2</fullName>
    </alternativeName>
</protein>